<keyword id="KW-0217">Developmental protein</keyword>
<keyword id="KW-0221">Differentiation</keyword>
<keyword id="KW-1015">Disulfide bond</keyword>
<keyword id="KW-0325">Glycoprotein</keyword>
<keyword id="KW-0393">Immunoglobulin domain</keyword>
<keyword id="KW-0524">Neurogenesis</keyword>
<keyword id="KW-1185">Reference proteome</keyword>
<keyword id="KW-0964">Secreted</keyword>
<keyword id="KW-0732">Signal</keyword>
<sequence length="751" mass="85433">MAVLALHAVFGIFIYFSSVKGSSQPQARVFLTFNELQETKTSEYHRISHSPLDYRILLMDEDQDRIYVGSKDHILSLNINNISQDPLSIFWPASANKVEECKMAGKDPTHGCGNFVRVIQSYNRTHLYVCGSGAFSPVCVYVNRGRRSEEQIFKIDSKCESGKGRCSFNPNVNTVSVMINEELFSGMYIDFMGTDAAIFRSLTKRNAVRTDQHNSKWLSEPIFVDAHVIPDGTDPNDAKIYFFFKERLTDNSGSTKQIHSMIARICPNDTGGQRSLVNKWTTFLKARLVCSVMDEDGTETYFDELEDVFLLETDNPRTTLVYGIFTTSSSIFKGSAVCVYHLSDIQTVFNGPFAHKEGPNHQLIPYQGRIPYPRPGTCPGGAFTPNMRTTKEFPDDVVTFIRNHPLMYNPIYPIHKRPLIIRIGTDYKYTKIAVDRVNAADGRCHVLFLGTDQGTVQKVVVLPTNFSASGELILEELEVFQSNSPITTMKISSKKQQLYVSSEEGVTQVPLHRCRIYGTACADCCLARDPYCAWDGNSCSRFYPTGKRRSRRQDVRHGNPLTQCRGFNLKAYRNAAETVQYGVKNNTTFLECTPKSPQASIKWLLQKDNDRRKEVKLSERIIATEQGLLIRSVQDSDRGLYHCIATENNFKQTLAKINFKVLDTEMVAYMTDKWSPWTWASSVRALQFHPKDFVGAFSHSEMQMINQYCKDSRQQGQRREEPQKMRGDYSKLKALINSRKSRNRRNQLPAS</sequence>
<evidence type="ECO:0000250" key="1"/>
<evidence type="ECO:0000255" key="2"/>
<evidence type="ECO:0000255" key="3">
    <source>
        <dbReference type="PROSITE-ProRule" id="PRU00352"/>
    </source>
</evidence>
<evidence type="ECO:0000256" key="4">
    <source>
        <dbReference type="SAM" id="MobiDB-lite"/>
    </source>
</evidence>
<evidence type="ECO:0000305" key="5"/>
<protein>
    <recommendedName>
        <fullName>Semaphorin-3C</fullName>
    </recommendedName>
    <alternativeName>
        <fullName>Collapsin-3</fullName>
        <shortName>COLL-3</shortName>
    </alternativeName>
</protein>
<accession>O42236</accession>
<accession>Q90664</accession>
<reference key="1">
    <citation type="journal article" date="1997" name="Neuron">
        <title>Secreted chick semaphorins bind recombinant neuropilin with similar affinities but bind different subsets of neurons in situ.</title>
        <authorList>
            <person name="Feiner L."/>
            <person name="Koppel A.M."/>
            <person name="Kobayashi H."/>
            <person name="Raper J.A."/>
        </authorList>
    </citation>
    <scope>NUCLEOTIDE SEQUENCE [MRNA]</scope>
    <source>
        <tissue>Fetal brain</tissue>
    </source>
</reference>
<reference key="2">
    <citation type="journal article" date="1995" name="Neuron">
        <title>A family of molecules related to collapsin in the embryonic chick nervous system.</title>
        <authorList>
            <person name="Luo Y."/>
            <person name="Shepherd I."/>
            <person name="Li J."/>
            <person name="Renzi M.J."/>
            <person name="Chang S."/>
            <person name="Raper J.A."/>
        </authorList>
    </citation>
    <scope>NUCLEOTIDE SEQUENCE [MRNA] OF 237-530</scope>
</reference>
<comment type="function">
    <text>Induces the collapse and paralysis of neuronal growth cones. Could potentially act as repulsive cues toward specific neuronal populations. Binds to neuropilin.</text>
</comment>
<comment type="subcellular location">
    <subcellularLocation>
        <location>Secreted</location>
    </subcellularLocation>
</comment>
<comment type="tissue specificity">
    <text>Collapsin-1, -2, -3, and -5 bind to overlapping but distinct axon tracts.</text>
</comment>
<comment type="domain">
    <text>Strong binding to neuropilin is mediated by the carboxy third of the protein.</text>
</comment>
<comment type="similarity">
    <text evidence="5">Belongs to the semaphorin family.</text>
</comment>
<organism>
    <name type="scientific">Gallus gallus</name>
    <name type="common">Chicken</name>
    <dbReference type="NCBI Taxonomy" id="9031"/>
    <lineage>
        <taxon>Eukaryota</taxon>
        <taxon>Metazoa</taxon>
        <taxon>Chordata</taxon>
        <taxon>Craniata</taxon>
        <taxon>Vertebrata</taxon>
        <taxon>Euteleostomi</taxon>
        <taxon>Archelosauria</taxon>
        <taxon>Archosauria</taxon>
        <taxon>Dinosauria</taxon>
        <taxon>Saurischia</taxon>
        <taxon>Theropoda</taxon>
        <taxon>Coelurosauria</taxon>
        <taxon>Aves</taxon>
        <taxon>Neognathae</taxon>
        <taxon>Galloanserae</taxon>
        <taxon>Galliformes</taxon>
        <taxon>Phasianidae</taxon>
        <taxon>Phasianinae</taxon>
        <taxon>Gallus</taxon>
    </lineage>
</organism>
<feature type="signal peptide" evidence="2">
    <location>
        <begin position="1"/>
        <end position="21"/>
    </location>
</feature>
<feature type="chain" id="PRO_0000032313" description="Semaphorin-3C">
    <location>
        <begin position="22"/>
        <end position="751"/>
    </location>
</feature>
<feature type="domain" description="Sema" evidence="3">
    <location>
        <begin position="28"/>
        <end position="511"/>
    </location>
</feature>
<feature type="domain" description="Ig-like C2-type">
    <location>
        <begin position="571"/>
        <end position="655"/>
    </location>
</feature>
<feature type="region of interest" description="Disordered" evidence="4">
    <location>
        <begin position="712"/>
        <end position="751"/>
    </location>
</feature>
<feature type="compositionally biased region" description="Basic and acidic residues" evidence="4">
    <location>
        <begin position="712"/>
        <end position="731"/>
    </location>
</feature>
<feature type="glycosylation site" description="N-linked (GlcNAc...) asparagine" evidence="2">
    <location>
        <position position="81"/>
    </location>
</feature>
<feature type="glycosylation site" description="N-linked (GlcNAc...) asparagine" evidence="2">
    <location>
        <position position="123"/>
    </location>
</feature>
<feature type="glycosylation site" description="N-linked (GlcNAc...) asparagine" evidence="2">
    <location>
        <position position="268"/>
    </location>
</feature>
<feature type="glycosylation site" description="N-linked (GlcNAc...) asparagine" evidence="2">
    <location>
        <position position="465"/>
    </location>
</feature>
<feature type="glycosylation site" description="N-linked (GlcNAc...) asparagine" evidence="2">
    <location>
        <position position="585"/>
    </location>
</feature>
<feature type="glycosylation site" description="N-linked (GlcNAc...) asparagine" evidence="2">
    <location>
        <position position="586"/>
    </location>
</feature>
<feature type="disulfide bond" evidence="1">
    <location>
        <begin position="101"/>
        <end position="112"/>
    </location>
</feature>
<feature type="disulfide bond" evidence="1">
    <location>
        <begin position="130"/>
        <end position="139"/>
    </location>
</feature>
<feature type="disulfide bond" evidence="1">
    <location>
        <begin position="266"/>
        <end position="378"/>
    </location>
</feature>
<feature type="disulfide bond" evidence="1">
    <location>
        <begin position="290"/>
        <end position="338"/>
    </location>
</feature>
<feature type="disulfide bond" evidence="1">
    <location>
        <begin position="514"/>
        <end position="532"/>
    </location>
</feature>
<feature type="disulfide bond" evidence="1">
    <location>
        <begin position="643"/>
        <end position="709"/>
    </location>
</feature>
<feature type="sequence conflict" description="In Ref. 2; AAA86897." evidence="5" ref="2">
    <original>A</original>
    <variation>D</variation>
    <location>
        <position position="238"/>
    </location>
</feature>
<feature type="sequence conflict" description="In Ref. 2; AAA86897." evidence="5" ref="2">
    <original>P</original>
    <variation>S</variation>
    <location>
        <position position="359"/>
    </location>
</feature>
<feature type="sequence conflict" description="In Ref. 2; AAA86897." evidence="5" ref="2">
    <original>H</original>
    <variation>D</variation>
    <location>
        <position position="404"/>
    </location>
</feature>
<proteinExistence type="evidence at transcript level"/>
<gene>
    <name type="primary">SEMA3C</name>
    <name type="synonym">COLL3</name>
</gene>
<dbReference type="EMBL" id="AF022946">
    <property type="protein sequence ID" value="AAB80951.1"/>
    <property type="molecule type" value="mRNA"/>
</dbReference>
<dbReference type="EMBL" id="U28241">
    <property type="protein sequence ID" value="AAA86897.1"/>
    <property type="molecule type" value="mRNA"/>
</dbReference>
<dbReference type="RefSeq" id="NP_989574.1">
    <property type="nucleotide sequence ID" value="NM_204243.1"/>
</dbReference>
<dbReference type="SMR" id="O42236"/>
<dbReference type="FunCoup" id="O42236">
    <property type="interactions" value="21"/>
</dbReference>
<dbReference type="STRING" id="9031.ENSGALP00000066035"/>
<dbReference type="GlyCosmos" id="O42236">
    <property type="glycosylation" value="6 sites, No reported glycans"/>
</dbReference>
<dbReference type="GlyGen" id="O42236">
    <property type="glycosylation" value="6 sites"/>
</dbReference>
<dbReference type="PaxDb" id="9031-ENSGALP00000013762"/>
<dbReference type="GeneID" id="374090"/>
<dbReference type="KEGG" id="gga:374090"/>
<dbReference type="CTD" id="10512"/>
<dbReference type="VEuPathDB" id="HostDB:geneid_374090"/>
<dbReference type="eggNOG" id="KOG3611">
    <property type="taxonomic scope" value="Eukaryota"/>
</dbReference>
<dbReference type="InParanoid" id="O42236"/>
<dbReference type="OrthoDB" id="9988752at2759"/>
<dbReference type="PhylomeDB" id="O42236"/>
<dbReference type="PRO" id="PR:O42236"/>
<dbReference type="Proteomes" id="UP000000539">
    <property type="component" value="Unassembled WGS sequence"/>
</dbReference>
<dbReference type="GO" id="GO:0005615">
    <property type="term" value="C:extracellular space"/>
    <property type="evidence" value="ECO:0000314"/>
    <property type="project" value="AgBase"/>
</dbReference>
<dbReference type="GO" id="GO:0005886">
    <property type="term" value="C:plasma membrane"/>
    <property type="evidence" value="ECO:0000318"/>
    <property type="project" value="GO_Central"/>
</dbReference>
<dbReference type="GO" id="GO:0045499">
    <property type="term" value="F:chemorepellent activity"/>
    <property type="evidence" value="ECO:0000318"/>
    <property type="project" value="GO_Central"/>
</dbReference>
<dbReference type="GO" id="GO:0038191">
    <property type="term" value="F:neuropilin binding"/>
    <property type="evidence" value="ECO:0000353"/>
    <property type="project" value="AgBase"/>
</dbReference>
<dbReference type="GO" id="GO:0030215">
    <property type="term" value="F:semaphorin receptor binding"/>
    <property type="evidence" value="ECO:0000318"/>
    <property type="project" value="GO_Central"/>
</dbReference>
<dbReference type="GO" id="GO:0007411">
    <property type="term" value="P:axon guidance"/>
    <property type="evidence" value="ECO:0000318"/>
    <property type="project" value="GO_Central"/>
</dbReference>
<dbReference type="GO" id="GO:0050919">
    <property type="term" value="P:negative chemotaxis"/>
    <property type="evidence" value="ECO:0000318"/>
    <property type="project" value="GO_Central"/>
</dbReference>
<dbReference type="GO" id="GO:0001755">
    <property type="term" value="P:neural crest cell migration"/>
    <property type="evidence" value="ECO:0000318"/>
    <property type="project" value="GO_Central"/>
</dbReference>
<dbReference type="GO" id="GO:0030335">
    <property type="term" value="P:positive regulation of cell migration"/>
    <property type="evidence" value="ECO:0000318"/>
    <property type="project" value="GO_Central"/>
</dbReference>
<dbReference type="GO" id="GO:0071526">
    <property type="term" value="P:semaphorin-plexin signaling pathway"/>
    <property type="evidence" value="ECO:0000318"/>
    <property type="project" value="GO_Central"/>
</dbReference>
<dbReference type="CDD" id="cd05871">
    <property type="entry name" value="Ig_Sema3"/>
    <property type="match status" value="1"/>
</dbReference>
<dbReference type="CDD" id="cd11251">
    <property type="entry name" value="Sema_3C"/>
    <property type="match status" value="1"/>
</dbReference>
<dbReference type="FunFam" id="2.130.10.10:FF:000123">
    <property type="entry name" value="Semaphorin 3C"/>
    <property type="match status" value="1"/>
</dbReference>
<dbReference type="FunFam" id="2.60.40.10:FF:000030">
    <property type="entry name" value="Semaphorin 3F like"/>
    <property type="match status" value="1"/>
</dbReference>
<dbReference type="FunFam" id="3.30.1680.10:FF:000001">
    <property type="entry name" value="Semaphorin 3F like"/>
    <property type="match status" value="1"/>
</dbReference>
<dbReference type="Gene3D" id="2.60.40.10">
    <property type="entry name" value="Immunoglobulins"/>
    <property type="match status" value="1"/>
</dbReference>
<dbReference type="Gene3D" id="3.30.1680.10">
    <property type="entry name" value="ligand-binding face of the semaphorins, domain 2"/>
    <property type="match status" value="1"/>
</dbReference>
<dbReference type="Gene3D" id="2.130.10.10">
    <property type="entry name" value="YVTN repeat-like/Quinoprotein amine dehydrogenase"/>
    <property type="match status" value="1"/>
</dbReference>
<dbReference type="InterPro" id="IPR007110">
    <property type="entry name" value="Ig-like_dom"/>
</dbReference>
<dbReference type="InterPro" id="IPR036179">
    <property type="entry name" value="Ig-like_dom_sf"/>
</dbReference>
<dbReference type="InterPro" id="IPR013783">
    <property type="entry name" value="Ig-like_fold"/>
</dbReference>
<dbReference type="InterPro" id="IPR003599">
    <property type="entry name" value="Ig_sub"/>
</dbReference>
<dbReference type="InterPro" id="IPR016201">
    <property type="entry name" value="PSI"/>
</dbReference>
<dbReference type="InterPro" id="IPR001627">
    <property type="entry name" value="Semap_dom"/>
</dbReference>
<dbReference type="InterPro" id="IPR036352">
    <property type="entry name" value="Semap_dom_sf"/>
</dbReference>
<dbReference type="InterPro" id="IPR027231">
    <property type="entry name" value="Semaphorin"/>
</dbReference>
<dbReference type="InterPro" id="IPR015943">
    <property type="entry name" value="WD40/YVTN_repeat-like_dom_sf"/>
</dbReference>
<dbReference type="PANTHER" id="PTHR11036">
    <property type="entry name" value="SEMAPHORIN"/>
    <property type="match status" value="1"/>
</dbReference>
<dbReference type="PANTHER" id="PTHR11036:SF25">
    <property type="entry name" value="SEMAPHORIN-3C"/>
    <property type="match status" value="1"/>
</dbReference>
<dbReference type="Pfam" id="PF01403">
    <property type="entry name" value="Sema"/>
    <property type="match status" value="1"/>
</dbReference>
<dbReference type="SMART" id="SM00409">
    <property type="entry name" value="IG"/>
    <property type="match status" value="1"/>
</dbReference>
<dbReference type="SMART" id="SM00423">
    <property type="entry name" value="PSI"/>
    <property type="match status" value="1"/>
</dbReference>
<dbReference type="SMART" id="SM00630">
    <property type="entry name" value="Sema"/>
    <property type="match status" value="1"/>
</dbReference>
<dbReference type="SUPFAM" id="SSF48726">
    <property type="entry name" value="Immunoglobulin"/>
    <property type="match status" value="1"/>
</dbReference>
<dbReference type="SUPFAM" id="SSF103575">
    <property type="entry name" value="Plexin repeat"/>
    <property type="match status" value="1"/>
</dbReference>
<dbReference type="SUPFAM" id="SSF101912">
    <property type="entry name" value="Sema domain"/>
    <property type="match status" value="1"/>
</dbReference>
<dbReference type="PROSITE" id="PS50835">
    <property type="entry name" value="IG_LIKE"/>
    <property type="match status" value="1"/>
</dbReference>
<dbReference type="PROSITE" id="PS51004">
    <property type="entry name" value="SEMA"/>
    <property type="match status" value="1"/>
</dbReference>
<name>SEM3C_CHICK</name>